<name>KCY_PARPJ</name>
<protein>
    <recommendedName>
        <fullName evidence="1">Cytidylate kinase</fullName>
        <shortName evidence="1">CK</shortName>
        <ecNumber evidence="1">2.7.4.25</ecNumber>
    </recommendedName>
    <alternativeName>
        <fullName evidence="1">Cytidine monophosphate kinase</fullName>
        <shortName evidence="1">CMP kinase</shortName>
    </alternativeName>
</protein>
<sequence length="228" mass="24492">MKPTRPFHQTPVITIDGPSASGKGTVAALVAASLGFHLLDSGALYRLAALASLRYGISGDDVDALVKLIDDLHITFREGLAQLDGVDVSAEIRAEEVGGRASAIAVHAPVRAALVARQRAFRKEPGLVADGRDMGTVIFQDAVLKVFMTASVEARAARRHKQLIQKGFSANIDDLLRDLRERDERDSQRVAAPLKPAADAKLLDTSALSVDQAVEQVVQWYEALVPHA</sequence>
<comment type="catalytic activity">
    <reaction evidence="1">
        <text>CMP + ATP = CDP + ADP</text>
        <dbReference type="Rhea" id="RHEA:11600"/>
        <dbReference type="ChEBI" id="CHEBI:30616"/>
        <dbReference type="ChEBI" id="CHEBI:58069"/>
        <dbReference type="ChEBI" id="CHEBI:60377"/>
        <dbReference type="ChEBI" id="CHEBI:456216"/>
        <dbReference type="EC" id="2.7.4.25"/>
    </reaction>
</comment>
<comment type="catalytic activity">
    <reaction evidence="1">
        <text>dCMP + ATP = dCDP + ADP</text>
        <dbReference type="Rhea" id="RHEA:25094"/>
        <dbReference type="ChEBI" id="CHEBI:30616"/>
        <dbReference type="ChEBI" id="CHEBI:57566"/>
        <dbReference type="ChEBI" id="CHEBI:58593"/>
        <dbReference type="ChEBI" id="CHEBI:456216"/>
        <dbReference type="EC" id="2.7.4.25"/>
    </reaction>
</comment>
<comment type="subcellular location">
    <subcellularLocation>
        <location evidence="1">Cytoplasm</location>
    </subcellularLocation>
</comment>
<comment type="similarity">
    <text evidence="1">Belongs to the cytidylate kinase family. Type 1 subfamily.</text>
</comment>
<gene>
    <name evidence="1" type="primary">cmk</name>
    <name type="ordered locus">Bphyt_3002</name>
</gene>
<keyword id="KW-0067">ATP-binding</keyword>
<keyword id="KW-0963">Cytoplasm</keyword>
<keyword id="KW-0418">Kinase</keyword>
<keyword id="KW-0547">Nucleotide-binding</keyword>
<keyword id="KW-0808">Transferase</keyword>
<feature type="chain" id="PRO_1000100655" description="Cytidylate kinase">
    <location>
        <begin position="1"/>
        <end position="228"/>
    </location>
</feature>
<feature type="binding site" evidence="1">
    <location>
        <begin position="17"/>
        <end position="25"/>
    </location>
    <ligand>
        <name>ATP</name>
        <dbReference type="ChEBI" id="CHEBI:30616"/>
    </ligand>
</feature>
<reference key="1">
    <citation type="journal article" date="2011" name="J. Bacteriol.">
        <title>Complete genome sequence of the plant growth-promoting endophyte Burkholderia phytofirmans strain PsJN.</title>
        <authorList>
            <person name="Weilharter A."/>
            <person name="Mitter B."/>
            <person name="Shin M.V."/>
            <person name="Chain P.S."/>
            <person name="Nowak J."/>
            <person name="Sessitsch A."/>
        </authorList>
    </citation>
    <scope>NUCLEOTIDE SEQUENCE [LARGE SCALE GENOMIC DNA]</scope>
    <source>
        <strain>DSM 17436 / LMG 22146 / PsJN</strain>
    </source>
</reference>
<accession>B2T629</accession>
<proteinExistence type="inferred from homology"/>
<evidence type="ECO:0000255" key="1">
    <source>
        <dbReference type="HAMAP-Rule" id="MF_00238"/>
    </source>
</evidence>
<dbReference type="EC" id="2.7.4.25" evidence="1"/>
<dbReference type="EMBL" id="CP001052">
    <property type="protein sequence ID" value="ACD17396.1"/>
    <property type="molecule type" value="Genomic_DNA"/>
</dbReference>
<dbReference type="RefSeq" id="WP_012433975.1">
    <property type="nucleotide sequence ID" value="NC_010681.1"/>
</dbReference>
<dbReference type="SMR" id="B2T629"/>
<dbReference type="STRING" id="398527.Bphyt_3002"/>
<dbReference type="KEGG" id="bpy:Bphyt_3002"/>
<dbReference type="eggNOG" id="COG0283">
    <property type="taxonomic scope" value="Bacteria"/>
</dbReference>
<dbReference type="HOGENOM" id="CLU_079959_2_0_4"/>
<dbReference type="OrthoDB" id="9807434at2"/>
<dbReference type="Proteomes" id="UP000001739">
    <property type="component" value="Chromosome 1"/>
</dbReference>
<dbReference type="GO" id="GO:0005737">
    <property type="term" value="C:cytoplasm"/>
    <property type="evidence" value="ECO:0007669"/>
    <property type="project" value="UniProtKB-SubCell"/>
</dbReference>
<dbReference type="GO" id="GO:0005524">
    <property type="term" value="F:ATP binding"/>
    <property type="evidence" value="ECO:0007669"/>
    <property type="project" value="UniProtKB-UniRule"/>
</dbReference>
<dbReference type="GO" id="GO:0036430">
    <property type="term" value="F:CMP kinase activity"/>
    <property type="evidence" value="ECO:0007669"/>
    <property type="project" value="RHEA"/>
</dbReference>
<dbReference type="GO" id="GO:0036431">
    <property type="term" value="F:dCMP kinase activity"/>
    <property type="evidence" value="ECO:0007669"/>
    <property type="project" value="RHEA"/>
</dbReference>
<dbReference type="GO" id="GO:0006220">
    <property type="term" value="P:pyrimidine nucleotide metabolic process"/>
    <property type="evidence" value="ECO:0007669"/>
    <property type="project" value="UniProtKB-UniRule"/>
</dbReference>
<dbReference type="CDD" id="cd02020">
    <property type="entry name" value="CMPK"/>
    <property type="match status" value="1"/>
</dbReference>
<dbReference type="CDD" id="cd02019">
    <property type="entry name" value="NK"/>
    <property type="match status" value="1"/>
</dbReference>
<dbReference type="Gene3D" id="3.40.50.300">
    <property type="entry name" value="P-loop containing nucleotide triphosphate hydrolases"/>
    <property type="match status" value="1"/>
</dbReference>
<dbReference type="HAMAP" id="MF_00238">
    <property type="entry name" value="Cytidyl_kinase_type1"/>
    <property type="match status" value="1"/>
</dbReference>
<dbReference type="InterPro" id="IPR003136">
    <property type="entry name" value="Cytidylate_kin"/>
</dbReference>
<dbReference type="InterPro" id="IPR011994">
    <property type="entry name" value="Cytidylate_kinase_dom"/>
</dbReference>
<dbReference type="InterPro" id="IPR027417">
    <property type="entry name" value="P-loop_NTPase"/>
</dbReference>
<dbReference type="NCBIfam" id="TIGR00017">
    <property type="entry name" value="cmk"/>
    <property type="match status" value="1"/>
</dbReference>
<dbReference type="Pfam" id="PF02224">
    <property type="entry name" value="Cytidylate_kin"/>
    <property type="match status" value="1"/>
</dbReference>
<dbReference type="SUPFAM" id="SSF52540">
    <property type="entry name" value="P-loop containing nucleoside triphosphate hydrolases"/>
    <property type="match status" value="1"/>
</dbReference>
<organism>
    <name type="scientific">Paraburkholderia phytofirmans (strain DSM 17436 / LMG 22146 / PsJN)</name>
    <name type="common">Burkholderia phytofirmans</name>
    <dbReference type="NCBI Taxonomy" id="398527"/>
    <lineage>
        <taxon>Bacteria</taxon>
        <taxon>Pseudomonadati</taxon>
        <taxon>Pseudomonadota</taxon>
        <taxon>Betaproteobacteria</taxon>
        <taxon>Burkholderiales</taxon>
        <taxon>Burkholderiaceae</taxon>
        <taxon>Paraburkholderia</taxon>
    </lineage>
</organism>